<evidence type="ECO:0000250" key="1"/>
<evidence type="ECO:0000255" key="2">
    <source>
        <dbReference type="HAMAP-Rule" id="MF_00340"/>
    </source>
</evidence>
<evidence type="ECO:0000305" key="3"/>
<gene>
    <name evidence="2" type="primary">rpmF</name>
    <name type="ordered locus">RC1203</name>
</gene>
<reference key="1">
    <citation type="journal article" date="2001" name="Science">
        <title>Mechanisms of evolution in Rickettsia conorii and R. prowazekii.</title>
        <authorList>
            <person name="Ogata H."/>
            <person name="Audic S."/>
            <person name="Renesto-Audiffren P."/>
            <person name="Fournier P.-E."/>
            <person name="Barbe V."/>
            <person name="Samson D."/>
            <person name="Roux V."/>
            <person name="Cossart P."/>
            <person name="Weissenbach J."/>
            <person name="Claverie J.-M."/>
            <person name="Raoult D."/>
        </authorList>
    </citation>
    <scope>NUCLEOTIDE SEQUENCE [LARGE SCALE GENOMIC DNA]</scope>
    <source>
        <strain>ATCC VR-613 / Malish 7</strain>
    </source>
</reference>
<sequence>MAVPKKKTSKSRRNMRRSHLALGKVNVIVDSQTGEYKLPHHVSLVDGTYNNRLVVTKKIKTEEEVA</sequence>
<feature type="initiator methionine" description="Removed" evidence="1">
    <location>
        <position position="1"/>
    </location>
</feature>
<feature type="chain" id="PRO_0000172396" description="Large ribosomal subunit protein bL32">
    <location>
        <begin position="2"/>
        <end position="66"/>
    </location>
</feature>
<dbReference type="EMBL" id="AE006914">
    <property type="protein sequence ID" value="AAL03741.1"/>
    <property type="molecule type" value="Genomic_DNA"/>
</dbReference>
<dbReference type="PIR" id="C97850">
    <property type="entry name" value="C97850"/>
</dbReference>
<dbReference type="RefSeq" id="WP_004997395.1">
    <property type="nucleotide sequence ID" value="NC_003103.1"/>
</dbReference>
<dbReference type="SMR" id="Q92GC0"/>
<dbReference type="GeneID" id="95361611"/>
<dbReference type="KEGG" id="rco:RC1203"/>
<dbReference type="HOGENOM" id="CLU_129084_2_0_5"/>
<dbReference type="Proteomes" id="UP000000816">
    <property type="component" value="Chromosome"/>
</dbReference>
<dbReference type="GO" id="GO:0015934">
    <property type="term" value="C:large ribosomal subunit"/>
    <property type="evidence" value="ECO:0007669"/>
    <property type="project" value="InterPro"/>
</dbReference>
<dbReference type="GO" id="GO:0003735">
    <property type="term" value="F:structural constituent of ribosome"/>
    <property type="evidence" value="ECO:0007669"/>
    <property type="project" value="InterPro"/>
</dbReference>
<dbReference type="GO" id="GO:0006412">
    <property type="term" value="P:translation"/>
    <property type="evidence" value="ECO:0007669"/>
    <property type="project" value="UniProtKB-UniRule"/>
</dbReference>
<dbReference type="Gene3D" id="1.20.5.640">
    <property type="entry name" value="Single helix bin"/>
    <property type="match status" value="1"/>
</dbReference>
<dbReference type="HAMAP" id="MF_00340">
    <property type="entry name" value="Ribosomal_bL32"/>
    <property type="match status" value="1"/>
</dbReference>
<dbReference type="InterPro" id="IPR002677">
    <property type="entry name" value="Ribosomal_bL32"/>
</dbReference>
<dbReference type="InterPro" id="IPR044957">
    <property type="entry name" value="Ribosomal_bL32_bact"/>
</dbReference>
<dbReference type="InterPro" id="IPR011332">
    <property type="entry name" value="Ribosomal_zn-bd"/>
</dbReference>
<dbReference type="NCBIfam" id="TIGR01031">
    <property type="entry name" value="rpmF_bact"/>
    <property type="match status" value="1"/>
</dbReference>
<dbReference type="PANTHER" id="PTHR35534">
    <property type="entry name" value="50S RIBOSOMAL PROTEIN L32"/>
    <property type="match status" value="1"/>
</dbReference>
<dbReference type="PANTHER" id="PTHR35534:SF1">
    <property type="entry name" value="LARGE RIBOSOMAL SUBUNIT PROTEIN BL32"/>
    <property type="match status" value="1"/>
</dbReference>
<dbReference type="Pfam" id="PF01783">
    <property type="entry name" value="Ribosomal_L32p"/>
    <property type="match status" value="1"/>
</dbReference>
<dbReference type="SUPFAM" id="SSF57829">
    <property type="entry name" value="Zn-binding ribosomal proteins"/>
    <property type="match status" value="1"/>
</dbReference>
<protein>
    <recommendedName>
        <fullName evidence="2">Large ribosomal subunit protein bL32</fullName>
    </recommendedName>
    <alternativeName>
        <fullName evidence="3">50S ribosomal protein L32</fullName>
    </alternativeName>
</protein>
<keyword id="KW-0687">Ribonucleoprotein</keyword>
<keyword id="KW-0689">Ribosomal protein</keyword>
<organism>
    <name type="scientific">Rickettsia conorii (strain ATCC VR-613 / Malish 7)</name>
    <dbReference type="NCBI Taxonomy" id="272944"/>
    <lineage>
        <taxon>Bacteria</taxon>
        <taxon>Pseudomonadati</taxon>
        <taxon>Pseudomonadota</taxon>
        <taxon>Alphaproteobacteria</taxon>
        <taxon>Rickettsiales</taxon>
        <taxon>Rickettsiaceae</taxon>
        <taxon>Rickettsieae</taxon>
        <taxon>Rickettsia</taxon>
        <taxon>spotted fever group</taxon>
    </lineage>
</organism>
<comment type="similarity">
    <text evidence="2">Belongs to the bacterial ribosomal protein bL32 family.</text>
</comment>
<name>RL32_RICCN</name>
<accession>Q92GC0</accession>
<proteinExistence type="inferred from homology"/>